<proteinExistence type="inferred from homology"/>
<organism>
    <name type="scientific">Yersinia pestis bv. Antiqua (strain Nepal516)</name>
    <dbReference type="NCBI Taxonomy" id="377628"/>
    <lineage>
        <taxon>Bacteria</taxon>
        <taxon>Pseudomonadati</taxon>
        <taxon>Pseudomonadota</taxon>
        <taxon>Gammaproteobacteria</taxon>
        <taxon>Enterobacterales</taxon>
        <taxon>Yersiniaceae</taxon>
        <taxon>Yersinia</taxon>
    </lineage>
</organism>
<keyword id="KW-0004">4Fe-4S</keyword>
<keyword id="KW-0028">Amino-acid biosynthesis</keyword>
<keyword id="KW-0198">Cysteine biosynthesis</keyword>
<keyword id="KW-0349">Heme</keyword>
<keyword id="KW-0408">Iron</keyword>
<keyword id="KW-0411">Iron-sulfur</keyword>
<keyword id="KW-0479">Metal-binding</keyword>
<keyword id="KW-0521">NADP</keyword>
<keyword id="KW-0560">Oxidoreductase</keyword>
<name>CYSI_YERPN</name>
<accession>Q1CLS7</accession>
<accession>C4GPQ9</accession>
<feature type="chain" id="PRO_1000068783" description="Sulfite reductase [NADPH] hemoprotein beta-component">
    <location>
        <begin position="1"/>
        <end position="576"/>
    </location>
</feature>
<feature type="binding site" evidence="1">
    <location>
        <position position="435"/>
    </location>
    <ligand>
        <name>[4Fe-4S] cluster</name>
        <dbReference type="ChEBI" id="CHEBI:49883"/>
    </ligand>
</feature>
<feature type="binding site" evidence="1">
    <location>
        <position position="441"/>
    </location>
    <ligand>
        <name>[4Fe-4S] cluster</name>
        <dbReference type="ChEBI" id="CHEBI:49883"/>
    </ligand>
</feature>
<feature type="binding site" evidence="1">
    <location>
        <position position="480"/>
    </location>
    <ligand>
        <name>[4Fe-4S] cluster</name>
        <dbReference type="ChEBI" id="CHEBI:49883"/>
    </ligand>
</feature>
<feature type="binding site" evidence="1">
    <location>
        <position position="484"/>
    </location>
    <ligand>
        <name>[4Fe-4S] cluster</name>
        <dbReference type="ChEBI" id="CHEBI:49883"/>
    </ligand>
</feature>
<feature type="binding site" description="axial binding residue" evidence="1">
    <location>
        <position position="484"/>
    </location>
    <ligand>
        <name>siroheme</name>
        <dbReference type="ChEBI" id="CHEBI:60052"/>
    </ligand>
    <ligandPart>
        <name>Fe</name>
        <dbReference type="ChEBI" id="CHEBI:18248"/>
    </ligandPart>
</feature>
<evidence type="ECO:0000255" key="1">
    <source>
        <dbReference type="HAMAP-Rule" id="MF_01540"/>
    </source>
</evidence>
<dbReference type="EC" id="1.8.1.2" evidence="1"/>
<dbReference type="EMBL" id="CP000305">
    <property type="protein sequence ID" value="ABG17053.1"/>
    <property type="molecule type" value="Genomic_DNA"/>
</dbReference>
<dbReference type="EMBL" id="ACNQ01000007">
    <property type="protein sequence ID" value="EEO77915.1"/>
    <property type="molecule type" value="Genomic_DNA"/>
</dbReference>
<dbReference type="RefSeq" id="WP_002209382.1">
    <property type="nucleotide sequence ID" value="NZ_ACNQ01000007.1"/>
</dbReference>
<dbReference type="SMR" id="Q1CLS7"/>
<dbReference type="GeneID" id="57975337"/>
<dbReference type="KEGG" id="ypn:YPN_0721"/>
<dbReference type="HOGENOM" id="CLU_001975_3_2_6"/>
<dbReference type="UniPathway" id="UPA00140">
    <property type="reaction ID" value="UER00207"/>
</dbReference>
<dbReference type="Proteomes" id="UP000008936">
    <property type="component" value="Chromosome"/>
</dbReference>
<dbReference type="GO" id="GO:0009337">
    <property type="term" value="C:sulfite reductase complex (NADPH)"/>
    <property type="evidence" value="ECO:0007669"/>
    <property type="project" value="InterPro"/>
</dbReference>
<dbReference type="GO" id="GO:0051539">
    <property type="term" value="F:4 iron, 4 sulfur cluster binding"/>
    <property type="evidence" value="ECO:0007669"/>
    <property type="project" value="UniProtKB-KW"/>
</dbReference>
<dbReference type="GO" id="GO:0020037">
    <property type="term" value="F:heme binding"/>
    <property type="evidence" value="ECO:0007669"/>
    <property type="project" value="InterPro"/>
</dbReference>
<dbReference type="GO" id="GO:0046872">
    <property type="term" value="F:metal ion binding"/>
    <property type="evidence" value="ECO:0007669"/>
    <property type="project" value="UniProtKB-KW"/>
</dbReference>
<dbReference type="GO" id="GO:0050661">
    <property type="term" value="F:NADP binding"/>
    <property type="evidence" value="ECO:0007669"/>
    <property type="project" value="InterPro"/>
</dbReference>
<dbReference type="GO" id="GO:0050311">
    <property type="term" value="F:sulfite reductase (ferredoxin) activity"/>
    <property type="evidence" value="ECO:0007669"/>
    <property type="project" value="TreeGrafter"/>
</dbReference>
<dbReference type="GO" id="GO:0004783">
    <property type="term" value="F:sulfite reductase (NADPH) activity"/>
    <property type="evidence" value="ECO:0007669"/>
    <property type="project" value="UniProtKB-UniRule"/>
</dbReference>
<dbReference type="GO" id="GO:0019344">
    <property type="term" value="P:cysteine biosynthetic process"/>
    <property type="evidence" value="ECO:0007669"/>
    <property type="project" value="UniProtKB-KW"/>
</dbReference>
<dbReference type="GO" id="GO:0070814">
    <property type="term" value="P:hydrogen sulfide biosynthetic process"/>
    <property type="evidence" value="ECO:0007669"/>
    <property type="project" value="UniProtKB-UniRule"/>
</dbReference>
<dbReference type="GO" id="GO:0000103">
    <property type="term" value="P:sulfate assimilation"/>
    <property type="evidence" value="ECO:0007669"/>
    <property type="project" value="UniProtKB-UniRule"/>
</dbReference>
<dbReference type="FunFam" id="3.30.413.10:FF:000003">
    <property type="entry name" value="Sulfite reductase [NADPH] hemoprotein beta-component"/>
    <property type="match status" value="1"/>
</dbReference>
<dbReference type="FunFam" id="3.30.413.10:FF:000004">
    <property type="entry name" value="Sulfite reductase [NADPH] hemoprotein beta-component"/>
    <property type="match status" value="1"/>
</dbReference>
<dbReference type="Gene3D" id="3.30.413.10">
    <property type="entry name" value="Sulfite Reductase Hemoprotein, domain 1"/>
    <property type="match status" value="2"/>
</dbReference>
<dbReference type="HAMAP" id="MF_01540">
    <property type="entry name" value="CysI"/>
    <property type="match status" value="1"/>
</dbReference>
<dbReference type="InterPro" id="IPR011786">
    <property type="entry name" value="CysI"/>
</dbReference>
<dbReference type="InterPro" id="IPR005117">
    <property type="entry name" value="NiRdtase/SiRdtase_haem-b_fer"/>
</dbReference>
<dbReference type="InterPro" id="IPR036136">
    <property type="entry name" value="Nit/Sulf_reduc_fer-like_dom_sf"/>
</dbReference>
<dbReference type="InterPro" id="IPR006067">
    <property type="entry name" value="NO2/SO3_Rdtase_4Fe4S_dom"/>
</dbReference>
<dbReference type="InterPro" id="IPR045169">
    <property type="entry name" value="NO2/SO3_Rdtase_4Fe4S_prot"/>
</dbReference>
<dbReference type="InterPro" id="IPR045854">
    <property type="entry name" value="NO2/SO3_Rdtase_4Fe4S_sf"/>
</dbReference>
<dbReference type="InterPro" id="IPR006066">
    <property type="entry name" value="NO2/SO3_Rdtase_FeS/sirohaem_BS"/>
</dbReference>
<dbReference type="NCBIfam" id="TIGR02041">
    <property type="entry name" value="CysI"/>
    <property type="match status" value="1"/>
</dbReference>
<dbReference type="NCBIfam" id="NF010029">
    <property type="entry name" value="PRK13504.1"/>
    <property type="match status" value="1"/>
</dbReference>
<dbReference type="PANTHER" id="PTHR11493:SF47">
    <property type="entry name" value="SULFITE REDUCTASE [NADPH] SUBUNIT BETA"/>
    <property type="match status" value="1"/>
</dbReference>
<dbReference type="PANTHER" id="PTHR11493">
    <property type="entry name" value="SULFITE REDUCTASE [NADPH] SUBUNIT BETA-RELATED"/>
    <property type="match status" value="1"/>
</dbReference>
<dbReference type="Pfam" id="PF01077">
    <property type="entry name" value="NIR_SIR"/>
    <property type="match status" value="1"/>
</dbReference>
<dbReference type="Pfam" id="PF03460">
    <property type="entry name" value="NIR_SIR_ferr"/>
    <property type="match status" value="2"/>
</dbReference>
<dbReference type="PRINTS" id="PR00397">
    <property type="entry name" value="SIROHAEM"/>
</dbReference>
<dbReference type="SUPFAM" id="SSF56014">
    <property type="entry name" value="Nitrite and sulphite reductase 4Fe-4S domain-like"/>
    <property type="match status" value="2"/>
</dbReference>
<dbReference type="SUPFAM" id="SSF55124">
    <property type="entry name" value="Nitrite/Sulfite reductase N-terminal domain-like"/>
    <property type="match status" value="2"/>
</dbReference>
<dbReference type="PROSITE" id="PS00365">
    <property type="entry name" value="NIR_SIR"/>
    <property type="match status" value="1"/>
</dbReference>
<protein>
    <recommendedName>
        <fullName evidence="1">Sulfite reductase [NADPH] hemoprotein beta-component</fullName>
        <shortName evidence="1">SiR-HP</shortName>
        <shortName evidence="1">SiRHP</shortName>
        <ecNumber evidence="1">1.8.1.2</ecNumber>
    </recommendedName>
</protein>
<gene>
    <name evidence="1" type="primary">cysI</name>
    <name type="ordered locus">YPN_0721</name>
    <name type="ORF">YP516_0767</name>
</gene>
<sequence>MNEKHPGPLVVSGKLSDGERMKSESNFLRGTIAEDLNNGLTGGFSGDNFLLIRFHGMYQQDDRDIRAERAEQKLEPRHAMMLRCRLPGGIITPQQWLGIDKFAADNTLYGSIRITNRQTFQFHGILKGNVKPAHQLLNELGLDALATANDVNRNVLCTSNPVESALHQEAYEWAKKISEHLLPRTRAYAEIWLDAEKVATTDEEPILGATYLPRKFKTTVVIPPQNDVDLHANDLNFVAVADKGKLIGFNVLVGGGLSIAHGDKNTYPRKASEFGYIPLKHTLAIAEAVVTTQRDWGNRTDRKNAKTKYTLERVGVETFKAEVEKRAGVSFSAIKPYQFIGRGDRIGWVKGVDKKWHLTLFVENGRLLDYPGRSLKTGVAEIAKIHQGDFRLTANQNLIVAGVPEKDKARIEALAREHGLMDDNVTSQRENSMACVSFPTCPLAMAEAERFLPEFVTRVEGILQQHGLADEHIVLRVTGCPNGCGRALLAEVGLVGKAVGRYNLHLGGNREGTRIPRMYRENITADEILLITDQLVGRWAKERHVDEGFGDFVIRAGVIAPVIDSARDFYDVQEAM</sequence>
<reference key="1">
    <citation type="journal article" date="2006" name="J. Bacteriol.">
        <title>Complete genome sequence of Yersinia pestis strains Antiqua and Nepal516: evidence of gene reduction in an emerging pathogen.</title>
        <authorList>
            <person name="Chain P.S.G."/>
            <person name="Hu P."/>
            <person name="Malfatti S.A."/>
            <person name="Radnedge L."/>
            <person name="Larimer F."/>
            <person name="Vergez L.M."/>
            <person name="Worsham P."/>
            <person name="Chu M.C."/>
            <person name="Andersen G.L."/>
        </authorList>
    </citation>
    <scope>NUCLEOTIDE SEQUENCE [LARGE SCALE GENOMIC DNA]</scope>
    <source>
        <strain>Nepal516</strain>
    </source>
</reference>
<reference key="2">
    <citation type="submission" date="2009-04" db="EMBL/GenBank/DDBJ databases">
        <title>Yersinia pestis Nepal516A whole genome shotgun sequencing project.</title>
        <authorList>
            <person name="Plunkett G. III"/>
            <person name="Anderson B.D."/>
            <person name="Baumler D.J."/>
            <person name="Burland V."/>
            <person name="Cabot E.L."/>
            <person name="Glasner J.D."/>
            <person name="Mau B."/>
            <person name="Neeno-Eckwall E."/>
            <person name="Perna N.T."/>
            <person name="Munk A.C."/>
            <person name="Tapia R."/>
            <person name="Green L.D."/>
            <person name="Rogers Y.C."/>
            <person name="Detter J.C."/>
            <person name="Bruce D.C."/>
            <person name="Brettin T.S."/>
        </authorList>
    </citation>
    <scope>NUCLEOTIDE SEQUENCE [LARGE SCALE GENOMIC DNA]</scope>
    <source>
        <strain>Nepal516</strain>
    </source>
</reference>
<comment type="function">
    <text evidence="1">Component of the sulfite reductase complex that catalyzes the 6-electron reduction of sulfite to sulfide. This is one of several activities required for the biosynthesis of L-cysteine from sulfate.</text>
</comment>
<comment type="catalytic activity">
    <reaction evidence="1">
        <text>hydrogen sulfide + 3 NADP(+) + 3 H2O = sulfite + 3 NADPH + 4 H(+)</text>
        <dbReference type="Rhea" id="RHEA:13801"/>
        <dbReference type="ChEBI" id="CHEBI:15377"/>
        <dbReference type="ChEBI" id="CHEBI:15378"/>
        <dbReference type="ChEBI" id="CHEBI:17359"/>
        <dbReference type="ChEBI" id="CHEBI:29919"/>
        <dbReference type="ChEBI" id="CHEBI:57783"/>
        <dbReference type="ChEBI" id="CHEBI:58349"/>
        <dbReference type="EC" id="1.8.1.2"/>
    </reaction>
</comment>
<comment type="cofactor">
    <cofactor evidence="1">
        <name>siroheme</name>
        <dbReference type="ChEBI" id="CHEBI:60052"/>
    </cofactor>
    <text evidence="1">Binds 1 siroheme per subunit.</text>
</comment>
<comment type="cofactor">
    <cofactor evidence="1">
        <name>[4Fe-4S] cluster</name>
        <dbReference type="ChEBI" id="CHEBI:49883"/>
    </cofactor>
    <text evidence="1">Binds 1 [4Fe-4S] cluster per subunit.</text>
</comment>
<comment type="pathway">
    <text evidence="1">Sulfur metabolism; hydrogen sulfide biosynthesis; hydrogen sulfide from sulfite (NADPH route): step 1/1.</text>
</comment>
<comment type="subunit">
    <text evidence="1">Alpha(8)-beta(8). The alpha component is a flavoprotein, the beta component is a hemoprotein.</text>
</comment>
<comment type="similarity">
    <text evidence="1">Belongs to the nitrite and sulfite reductase 4Fe-4S domain family.</text>
</comment>